<organism>
    <name type="scientific">Halorubrum lacusprofundi (strain ATCC 49239 / DSM 5036 / JCM 8891 / ACAM 34)</name>
    <dbReference type="NCBI Taxonomy" id="416348"/>
    <lineage>
        <taxon>Archaea</taxon>
        <taxon>Methanobacteriati</taxon>
        <taxon>Methanobacteriota</taxon>
        <taxon>Stenosarchaea group</taxon>
        <taxon>Halobacteria</taxon>
        <taxon>Halobacteriales</taxon>
        <taxon>Haloferacaceae</taxon>
        <taxon>Halorubrum</taxon>
    </lineage>
</organism>
<sequence>MKLHEHQAKTIFADAGIPVPDSRLATTVDEALDAVDEIGYPAAIKAQVHVGGRGKAGGIKIATDRDEAEQYAEEILGMDLKGYTVDQILVEQGVDFVDELYVGVTMDRGEGQPVLMVSTEGGVNIEEVAEENPDAIAREHVDPAFGLHPYQARKVVYEAGVDADVALDVASILTTLYDLYEENDASEIEVNPVMITSDRDVIAADAVMNIDEDALFRHPDLAEMAEESYEDDLERKAGEYGFDYVRLSGNVGIIGNGAGLVMTTLDLVDYYGGKPANFLDIGGGAKAERVTKALDMVFSDENVDAVVFNIFGGITRGDEVAKGINEALEQFDEIPKKVVVRLAGTNAEEGMEILNTDLVEVEETLEDAVQRAVKNAEEVTQ</sequence>
<protein>
    <recommendedName>
        <fullName evidence="1">Succinate--CoA ligase [ADP-forming] subunit beta</fullName>
        <ecNumber evidence="1">6.2.1.5</ecNumber>
    </recommendedName>
    <alternativeName>
        <fullName evidence="1">Succinyl-CoA synthetase subunit beta</fullName>
        <shortName evidence="1">SCS-beta</shortName>
    </alternativeName>
</protein>
<feature type="chain" id="PRO_1000197722" description="Succinate--CoA ligase [ADP-forming] subunit beta">
    <location>
        <begin position="1"/>
        <end position="381"/>
    </location>
</feature>
<feature type="domain" description="ATP-grasp" evidence="1">
    <location>
        <begin position="9"/>
        <end position="236"/>
    </location>
</feature>
<feature type="binding site" evidence="1">
    <location>
        <position position="45"/>
    </location>
    <ligand>
        <name>ATP</name>
        <dbReference type="ChEBI" id="CHEBI:30616"/>
    </ligand>
</feature>
<feature type="binding site" evidence="1">
    <location>
        <begin position="52"/>
        <end position="54"/>
    </location>
    <ligand>
        <name>ATP</name>
        <dbReference type="ChEBI" id="CHEBI:30616"/>
    </ligand>
</feature>
<feature type="binding site" evidence="1">
    <location>
        <position position="91"/>
    </location>
    <ligand>
        <name>ATP</name>
        <dbReference type="ChEBI" id="CHEBI:30616"/>
    </ligand>
</feature>
<feature type="binding site" evidence="1">
    <location>
        <position position="94"/>
    </location>
    <ligand>
        <name>ATP</name>
        <dbReference type="ChEBI" id="CHEBI:30616"/>
    </ligand>
</feature>
<feature type="binding site" evidence="1">
    <location>
        <position position="99"/>
    </location>
    <ligand>
        <name>ATP</name>
        <dbReference type="ChEBI" id="CHEBI:30616"/>
    </ligand>
</feature>
<feature type="binding site" evidence="1">
    <location>
        <position position="191"/>
    </location>
    <ligand>
        <name>Mg(2+)</name>
        <dbReference type="ChEBI" id="CHEBI:18420"/>
    </ligand>
</feature>
<feature type="binding site" evidence="1">
    <location>
        <position position="205"/>
    </location>
    <ligand>
        <name>Mg(2+)</name>
        <dbReference type="ChEBI" id="CHEBI:18420"/>
    </ligand>
</feature>
<feature type="binding site" evidence="1">
    <location>
        <position position="256"/>
    </location>
    <ligand>
        <name>substrate</name>
        <note>ligand shared with subunit alpha</note>
    </ligand>
</feature>
<feature type="binding site" evidence="1">
    <location>
        <begin position="313"/>
        <end position="315"/>
    </location>
    <ligand>
        <name>substrate</name>
        <note>ligand shared with subunit alpha</note>
    </ligand>
</feature>
<comment type="function">
    <text evidence="1">Succinyl-CoA synthetase functions in the citric acid cycle (TCA), coupling the hydrolysis of succinyl-CoA to the synthesis of either ATP or GTP and thus represents the only step of substrate-level phosphorylation in the TCA. The beta subunit provides nucleotide specificity of the enzyme and binds the substrate succinate, while the binding sites for coenzyme A and phosphate are found in the alpha subunit.</text>
</comment>
<comment type="catalytic activity">
    <reaction evidence="1">
        <text>succinate + ATP + CoA = succinyl-CoA + ADP + phosphate</text>
        <dbReference type="Rhea" id="RHEA:17661"/>
        <dbReference type="ChEBI" id="CHEBI:30031"/>
        <dbReference type="ChEBI" id="CHEBI:30616"/>
        <dbReference type="ChEBI" id="CHEBI:43474"/>
        <dbReference type="ChEBI" id="CHEBI:57287"/>
        <dbReference type="ChEBI" id="CHEBI:57292"/>
        <dbReference type="ChEBI" id="CHEBI:456216"/>
        <dbReference type="EC" id="6.2.1.5"/>
    </reaction>
    <physiologicalReaction direction="right-to-left" evidence="1">
        <dbReference type="Rhea" id="RHEA:17663"/>
    </physiologicalReaction>
</comment>
<comment type="catalytic activity">
    <reaction evidence="1">
        <text>GTP + succinate + CoA = succinyl-CoA + GDP + phosphate</text>
        <dbReference type="Rhea" id="RHEA:22120"/>
        <dbReference type="ChEBI" id="CHEBI:30031"/>
        <dbReference type="ChEBI" id="CHEBI:37565"/>
        <dbReference type="ChEBI" id="CHEBI:43474"/>
        <dbReference type="ChEBI" id="CHEBI:57287"/>
        <dbReference type="ChEBI" id="CHEBI:57292"/>
        <dbReference type="ChEBI" id="CHEBI:58189"/>
    </reaction>
    <physiologicalReaction direction="right-to-left" evidence="1">
        <dbReference type="Rhea" id="RHEA:22122"/>
    </physiologicalReaction>
</comment>
<comment type="cofactor">
    <cofactor evidence="1">
        <name>Mg(2+)</name>
        <dbReference type="ChEBI" id="CHEBI:18420"/>
    </cofactor>
    <text evidence="1">Binds 1 Mg(2+) ion per subunit.</text>
</comment>
<comment type="pathway">
    <text evidence="1">Carbohydrate metabolism; tricarboxylic acid cycle; succinate from succinyl-CoA (ligase route): step 1/1.</text>
</comment>
<comment type="subunit">
    <text evidence="1">Heterotetramer of two alpha and two beta subunits.</text>
</comment>
<comment type="similarity">
    <text evidence="1">Belongs to the succinate/malate CoA ligase beta subunit family.</text>
</comment>
<name>SUCC_HALLT</name>
<evidence type="ECO:0000255" key="1">
    <source>
        <dbReference type="HAMAP-Rule" id="MF_00558"/>
    </source>
</evidence>
<dbReference type="EC" id="6.2.1.5" evidence="1"/>
<dbReference type="EMBL" id="CP001365">
    <property type="protein sequence ID" value="ACM57784.1"/>
    <property type="molecule type" value="Genomic_DNA"/>
</dbReference>
<dbReference type="RefSeq" id="WP_015910905.1">
    <property type="nucleotide sequence ID" value="NC_012029.1"/>
</dbReference>
<dbReference type="SMR" id="B9LRR0"/>
<dbReference type="GeneID" id="7401142"/>
<dbReference type="KEGG" id="hla:Hlac_2207"/>
<dbReference type="eggNOG" id="arCOG01337">
    <property type="taxonomic scope" value="Archaea"/>
</dbReference>
<dbReference type="HOGENOM" id="CLU_037430_0_2_2"/>
<dbReference type="UniPathway" id="UPA00223">
    <property type="reaction ID" value="UER00999"/>
</dbReference>
<dbReference type="Proteomes" id="UP000000740">
    <property type="component" value="Chromosome 1"/>
</dbReference>
<dbReference type="GO" id="GO:0042709">
    <property type="term" value="C:succinate-CoA ligase complex"/>
    <property type="evidence" value="ECO:0007669"/>
    <property type="project" value="TreeGrafter"/>
</dbReference>
<dbReference type="GO" id="GO:0005524">
    <property type="term" value="F:ATP binding"/>
    <property type="evidence" value="ECO:0007669"/>
    <property type="project" value="UniProtKB-UniRule"/>
</dbReference>
<dbReference type="GO" id="GO:0000287">
    <property type="term" value="F:magnesium ion binding"/>
    <property type="evidence" value="ECO:0007669"/>
    <property type="project" value="UniProtKB-UniRule"/>
</dbReference>
<dbReference type="GO" id="GO:0004775">
    <property type="term" value="F:succinate-CoA ligase (ADP-forming) activity"/>
    <property type="evidence" value="ECO:0007669"/>
    <property type="project" value="UniProtKB-UniRule"/>
</dbReference>
<dbReference type="GO" id="GO:0004776">
    <property type="term" value="F:succinate-CoA ligase (GDP-forming) activity"/>
    <property type="evidence" value="ECO:0007669"/>
    <property type="project" value="RHEA"/>
</dbReference>
<dbReference type="GO" id="GO:0006104">
    <property type="term" value="P:succinyl-CoA metabolic process"/>
    <property type="evidence" value="ECO:0007669"/>
    <property type="project" value="TreeGrafter"/>
</dbReference>
<dbReference type="GO" id="GO:0006099">
    <property type="term" value="P:tricarboxylic acid cycle"/>
    <property type="evidence" value="ECO:0007669"/>
    <property type="project" value="UniProtKB-UniRule"/>
</dbReference>
<dbReference type="FunFam" id="3.30.470.20:FF:000002">
    <property type="entry name" value="Succinate--CoA ligase [ADP-forming] subunit beta"/>
    <property type="match status" value="1"/>
</dbReference>
<dbReference type="FunFam" id="3.40.50.261:FF:000007">
    <property type="entry name" value="Succinate--CoA ligase [ADP-forming] subunit beta"/>
    <property type="match status" value="1"/>
</dbReference>
<dbReference type="Gene3D" id="3.30.1490.20">
    <property type="entry name" value="ATP-grasp fold, A domain"/>
    <property type="match status" value="1"/>
</dbReference>
<dbReference type="Gene3D" id="3.30.470.20">
    <property type="entry name" value="ATP-grasp fold, B domain"/>
    <property type="match status" value="1"/>
</dbReference>
<dbReference type="Gene3D" id="3.40.50.261">
    <property type="entry name" value="Succinyl-CoA synthetase domains"/>
    <property type="match status" value="1"/>
</dbReference>
<dbReference type="HAMAP" id="MF_00558">
    <property type="entry name" value="Succ_CoA_beta"/>
    <property type="match status" value="1"/>
</dbReference>
<dbReference type="InterPro" id="IPR011761">
    <property type="entry name" value="ATP-grasp"/>
</dbReference>
<dbReference type="InterPro" id="IPR013650">
    <property type="entry name" value="ATP-grasp_succ-CoA_synth-type"/>
</dbReference>
<dbReference type="InterPro" id="IPR013815">
    <property type="entry name" value="ATP_grasp_subdomain_1"/>
</dbReference>
<dbReference type="InterPro" id="IPR017866">
    <property type="entry name" value="Succ-CoA_synthase_bsu_CS"/>
</dbReference>
<dbReference type="InterPro" id="IPR005811">
    <property type="entry name" value="SUCC_ACL_C"/>
</dbReference>
<dbReference type="InterPro" id="IPR005809">
    <property type="entry name" value="Succ_CoA_ligase-like_bsu"/>
</dbReference>
<dbReference type="InterPro" id="IPR016102">
    <property type="entry name" value="Succinyl-CoA_synth-like"/>
</dbReference>
<dbReference type="NCBIfam" id="NF001913">
    <property type="entry name" value="PRK00696.1"/>
    <property type="match status" value="1"/>
</dbReference>
<dbReference type="NCBIfam" id="TIGR01016">
    <property type="entry name" value="sucCoAbeta"/>
    <property type="match status" value="1"/>
</dbReference>
<dbReference type="PANTHER" id="PTHR11815:SF10">
    <property type="entry name" value="SUCCINATE--COA LIGASE [GDP-FORMING] SUBUNIT BETA, MITOCHONDRIAL"/>
    <property type="match status" value="1"/>
</dbReference>
<dbReference type="PANTHER" id="PTHR11815">
    <property type="entry name" value="SUCCINYL-COA SYNTHETASE BETA CHAIN"/>
    <property type="match status" value="1"/>
</dbReference>
<dbReference type="Pfam" id="PF08442">
    <property type="entry name" value="ATP-grasp_2"/>
    <property type="match status" value="1"/>
</dbReference>
<dbReference type="Pfam" id="PF00549">
    <property type="entry name" value="Ligase_CoA"/>
    <property type="match status" value="1"/>
</dbReference>
<dbReference type="PIRSF" id="PIRSF001554">
    <property type="entry name" value="SucCS_beta"/>
    <property type="match status" value="1"/>
</dbReference>
<dbReference type="SUPFAM" id="SSF56059">
    <property type="entry name" value="Glutathione synthetase ATP-binding domain-like"/>
    <property type="match status" value="1"/>
</dbReference>
<dbReference type="SUPFAM" id="SSF52210">
    <property type="entry name" value="Succinyl-CoA synthetase domains"/>
    <property type="match status" value="1"/>
</dbReference>
<dbReference type="PROSITE" id="PS50975">
    <property type="entry name" value="ATP_GRASP"/>
    <property type="match status" value="1"/>
</dbReference>
<dbReference type="PROSITE" id="PS01217">
    <property type="entry name" value="SUCCINYL_COA_LIG_3"/>
    <property type="match status" value="1"/>
</dbReference>
<gene>
    <name evidence="1" type="primary">sucC</name>
    <name type="ordered locus">Hlac_2207</name>
</gene>
<accession>B9LRR0</accession>
<reference key="1">
    <citation type="journal article" date="2016" name="Stand. Genomic Sci.">
        <title>Complete genome sequence of the Antarctic Halorubrum lacusprofundi type strain ACAM 34.</title>
        <authorList>
            <person name="Anderson I.J."/>
            <person name="DasSarma P."/>
            <person name="Lucas S."/>
            <person name="Copeland A."/>
            <person name="Lapidus A."/>
            <person name="Del Rio T.G."/>
            <person name="Tice H."/>
            <person name="Dalin E."/>
            <person name="Bruce D.C."/>
            <person name="Goodwin L."/>
            <person name="Pitluck S."/>
            <person name="Sims D."/>
            <person name="Brettin T.S."/>
            <person name="Detter J.C."/>
            <person name="Han C.S."/>
            <person name="Larimer F."/>
            <person name="Hauser L."/>
            <person name="Land M."/>
            <person name="Ivanova N."/>
            <person name="Richardson P."/>
            <person name="Cavicchioli R."/>
            <person name="DasSarma S."/>
            <person name="Woese C.R."/>
            <person name="Kyrpides N.C."/>
        </authorList>
    </citation>
    <scope>NUCLEOTIDE SEQUENCE [LARGE SCALE GENOMIC DNA]</scope>
    <source>
        <strain>ATCC 49239 / DSM 5036 / JCM 8891 / ACAM 34</strain>
    </source>
</reference>
<keyword id="KW-0067">ATP-binding</keyword>
<keyword id="KW-0436">Ligase</keyword>
<keyword id="KW-0460">Magnesium</keyword>
<keyword id="KW-0479">Metal-binding</keyword>
<keyword id="KW-0547">Nucleotide-binding</keyword>
<keyword id="KW-1185">Reference proteome</keyword>
<keyword id="KW-0816">Tricarboxylic acid cycle</keyword>
<proteinExistence type="inferred from homology"/>